<name>DAPA_STAAN</name>
<evidence type="ECO:0000255" key="1">
    <source>
        <dbReference type="HAMAP-Rule" id="MF_00418"/>
    </source>
</evidence>
<evidence type="ECO:0000305" key="2"/>
<keyword id="KW-0028">Amino-acid biosynthesis</keyword>
<keyword id="KW-0963">Cytoplasm</keyword>
<keyword id="KW-0220">Diaminopimelate biosynthesis</keyword>
<keyword id="KW-0456">Lyase</keyword>
<keyword id="KW-0457">Lysine biosynthesis</keyword>
<keyword id="KW-0704">Schiff base</keyword>
<dbReference type="EC" id="4.3.3.7" evidence="1"/>
<dbReference type="EMBL" id="BA000018">
    <property type="protein sequence ID" value="BAB42487.1"/>
    <property type="molecule type" value="Genomic_DNA"/>
</dbReference>
<dbReference type="PIR" id="C89916">
    <property type="entry name" value="C89916"/>
</dbReference>
<dbReference type="RefSeq" id="WP_000149278.1">
    <property type="nucleotide sequence ID" value="NC_002745.2"/>
</dbReference>
<dbReference type="SMR" id="P63948"/>
<dbReference type="EnsemblBacteria" id="BAB42487">
    <property type="protein sequence ID" value="BAB42487"/>
    <property type="gene ID" value="BAB42487"/>
</dbReference>
<dbReference type="KEGG" id="sau:SA1227"/>
<dbReference type="HOGENOM" id="CLU_049343_7_0_9"/>
<dbReference type="UniPathway" id="UPA00034">
    <property type="reaction ID" value="UER00017"/>
</dbReference>
<dbReference type="GO" id="GO:0005829">
    <property type="term" value="C:cytosol"/>
    <property type="evidence" value="ECO:0007669"/>
    <property type="project" value="TreeGrafter"/>
</dbReference>
<dbReference type="GO" id="GO:0008840">
    <property type="term" value="F:4-hydroxy-tetrahydrodipicolinate synthase activity"/>
    <property type="evidence" value="ECO:0007669"/>
    <property type="project" value="UniProtKB-UniRule"/>
</dbReference>
<dbReference type="GO" id="GO:0019877">
    <property type="term" value="P:diaminopimelate biosynthetic process"/>
    <property type="evidence" value="ECO:0007669"/>
    <property type="project" value="UniProtKB-UniRule"/>
</dbReference>
<dbReference type="GO" id="GO:0009089">
    <property type="term" value="P:lysine biosynthetic process via diaminopimelate"/>
    <property type="evidence" value="ECO:0007669"/>
    <property type="project" value="UniProtKB-UniRule"/>
</dbReference>
<dbReference type="CDD" id="cd00950">
    <property type="entry name" value="DHDPS"/>
    <property type="match status" value="1"/>
</dbReference>
<dbReference type="Gene3D" id="3.20.20.70">
    <property type="entry name" value="Aldolase class I"/>
    <property type="match status" value="1"/>
</dbReference>
<dbReference type="HAMAP" id="MF_00418">
    <property type="entry name" value="DapA"/>
    <property type="match status" value="1"/>
</dbReference>
<dbReference type="InterPro" id="IPR013785">
    <property type="entry name" value="Aldolase_TIM"/>
</dbReference>
<dbReference type="InterPro" id="IPR005263">
    <property type="entry name" value="DapA"/>
</dbReference>
<dbReference type="InterPro" id="IPR002220">
    <property type="entry name" value="DapA-like"/>
</dbReference>
<dbReference type="InterPro" id="IPR020625">
    <property type="entry name" value="Schiff_base-form_aldolases_AS"/>
</dbReference>
<dbReference type="NCBIfam" id="TIGR00674">
    <property type="entry name" value="dapA"/>
    <property type="match status" value="1"/>
</dbReference>
<dbReference type="PANTHER" id="PTHR12128:SF66">
    <property type="entry name" value="4-HYDROXY-2-OXOGLUTARATE ALDOLASE, MITOCHONDRIAL"/>
    <property type="match status" value="1"/>
</dbReference>
<dbReference type="PANTHER" id="PTHR12128">
    <property type="entry name" value="DIHYDRODIPICOLINATE SYNTHASE"/>
    <property type="match status" value="1"/>
</dbReference>
<dbReference type="Pfam" id="PF00701">
    <property type="entry name" value="DHDPS"/>
    <property type="match status" value="1"/>
</dbReference>
<dbReference type="PIRSF" id="PIRSF001365">
    <property type="entry name" value="DHDPS"/>
    <property type="match status" value="1"/>
</dbReference>
<dbReference type="PRINTS" id="PR00146">
    <property type="entry name" value="DHPICSNTHASE"/>
</dbReference>
<dbReference type="SMART" id="SM01130">
    <property type="entry name" value="DHDPS"/>
    <property type="match status" value="1"/>
</dbReference>
<dbReference type="SUPFAM" id="SSF51569">
    <property type="entry name" value="Aldolase"/>
    <property type="match status" value="1"/>
</dbReference>
<dbReference type="PROSITE" id="PS00666">
    <property type="entry name" value="DHDPS_2"/>
    <property type="match status" value="1"/>
</dbReference>
<accession>P63948</accession>
<accession>Q99U89</accession>
<organism>
    <name type="scientific">Staphylococcus aureus (strain N315)</name>
    <dbReference type="NCBI Taxonomy" id="158879"/>
    <lineage>
        <taxon>Bacteria</taxon>
        <taxon>Bacillati</taxon>
        <taxon>Bacillota</taxon>
        <taxon>Bacilli</taxon>
        <taxon>Bacillales</taxon>
        <taxon>Staphylococcaceae</taxon>
        <taxon>Staphylococcus</taxon>
    </lineage>
</organism>
<gene>
    <name evidence="1" type="primary">dapA</name>
    <name type="ordered locus">SA1227</name>
</gene>
<feature type="chain" id="PRO_0000103156" description="4-hydroxy-tetrahydrodipicolinate synthase">
    <location>
        <begin position="1"/>
        <end position="295"/>
    </location>
</feature>
<feature type="active site" description="Proton donor/acceptor" evidence="1">
    <location>
        <position position="135"/>
    </location>
</feature>
<feature type="active site" description="Schiff-base intermediate with substrate" evidence="1">
    <location>
        <position position="163"/>
    </location>
</feature>
<feature type="binding site" evidence="1">
    <location>
        <position position="47"/>
    </location>
    <ligand>
        <name>pyruvate</name>
        <dbReference type="ChEBI" id="CHEBI:15361"/>
    </ligand>
</feature>
<feature type="binding site" evidence="1">
    <location>
        <position position="206"/>
    </location>
    <ligand>
        <name>pyruvate</name>
        <dbReference type="ChEBI" id="CHEBI:15361"/>
    </ligand>
</feature>
<feature type="site" description="Part of a proton relay during catalysis" evidence="1">
    <location>
        <position position="46"/>
    </location>
</feature>
<feature type="site" description="Part of a proton relay during catalysis" evidence="1">
    <location>
        <position position="109"/>
    </location>
</feature>
<proteinExistence type="inferred from homology"/>
<protein>
    <recommendedName>
        <fullName evidence="1">4-hydroxy-tetrahydrodipicolinate synthase</fullName>
        <shortName evidence="1">HTPA synthase</shortName>
        <ecNumber evidence="1">4.3.3.7</ecNumber>
    </recommendedName>
</protein>
<sequence length="295" mass="32660">MTHLFEGVGVALTTPFTNNKVNLEALKAHVNFLLENNAQAIIVNGTTAESPTLTTDEKERILKTVIDLVDKRVPVIAGTGTNDTEKSIQASFQAKALGADAIMLITPYYNKTNQRGLVKHFEAITDAVKLPVVLYNVPSRTNMTIEPETVEILSQHPYIVALKDATNDFEYLEEVKKRIDTNSFALYSGNDDNVVEYYQRGGQGVISVIANVIPKEFQALYDAQQSGLDIQDQFKPIGTLLSALSVDINPIPIKALTSYLEFGNYELRLPLVSLEDTDTKVLREAYDTFKAGENE</sequence>
<reference key="1">
    <citation type="journal article" date="2001" name="Lancet">
        <title>Whole genome sequencing of meticillin-resistant Staphylococcus aureus.</title>
        <authorList>
            <person name="Kuroda M."/>
            <person name="Ohta T."/>
            <person name="Uchiyama I."/>
            <person name="Baba T."/>
            <person name="Yuzawa H."/>
            <person name="Kobayashi I."/>
            <person name="Cui L."/>
            <person name="Oguchi A."/>
            <person name="Aoki K."/>
            <person name="Nagai Y."/>
            <person name="Lian J.-Q."/>
            <person name="Ito T."/>
            <person name="Kanamori M."/>
            <person name="Matsumaru H."/>
            <person name="Maruyama A."/>
            <person name="Murakami H."/>
            <person name="Hosoyama A."/>
            <person name="Mizutani-Ui Y."/>
            <person name="Takahashi N.K."/>
            <person name="Sawano T."/>
            <person name="Inoue R."/>
            <person name="Kaito C."/>
            <person name="Sekimizu K."/>
            <person name="Hirakawa H."/>
            <person name="Kuhara S."/>
            <person name="Goto S."/>
            <person name="Yabuzaki J."/>
            <person name="Kanehisa M."/>
            <person name="Yamashita A."/>
            <person name="Oshima K."/>
            <person name="Furuya K."/>
            <person name="Yoshino C."/>
            <person name="Shiba T."/>
            <person name="Hattori M."/>
            <person name="Ogasawara N."/>
            <person name="Hayashi H."/>
            <person name="Hiramatsu K."/>
        </authorList>
    </citation>
    <scope>NUCLEOTIDE SEQUENCE [LARGE SCALE GENOMIC DNA]</scope>
    <source>
        <strain>N315</strain>
    </source>
</reference>
<comment type="function">
    <text evidence="1">Catalyzes the condensation of (S)-aspartate-beta-semialdehyde [(S)-ASA] and pyruvate to 4-hydroxy-tetrahydrodipicolinate (HTPA).</text>
</comment>
<comment type="catalytic activity">
    <reaction evidence="1">
        <text>L-aspartate 4-semialdehyde + pyruvate = (2S,4S)-4-hydroxy-2,3,4,5-tetrahydrodipicolinate + H2O + H(+)</text>
        <dbReference type="Rhea" id="RHEA:34171"/>
        <dbReference type="ChEBI" id="CHEBI:15361"/>
        <dbReference type="ChEBI" id="CHEBI:15377"/>
        <dbReference type="ChEBI" id="CHEBI:15378"/>
        <dbReference type="ChEBI" id="CHEBI:67139"/>
        <dbReference type="ChEBI" id="CHEBI:537519"/>
        <dbReference type="EC" id="4.3.3.7"/>
    </reaction>
</comment>
<comment type="pathway">
    <text evidence="1">Amino-acid biosynthesis; L-lysine biosynthesis via DAP pathway; (S)-tetrahydrodipicolinate from L-aspartate: step 3/4.</text>
</comment>
<comment type="subunit">
    <text evidence="1">Homodimer.</text>
</comment>
<comment type="subcellular location">
    <subcellularLocation>
        <location evidence="1">Cytoplasm</location>
    </subcellularLocation>
</comment>
<comment type="similarity">
    <text evidence="1">Belongs to the DapA family.</text>
</comment>
<comment type="caution">
    <text evidence="2">Was originally thought to be a dihydrodipicolinate synthase (DHDPS), catalyzing the condensation of (S)-aspartate-beta-semialdehyde [(S)-ASA] and pyruvate to dihydrodipicolinate (DHDP). However, it was shown in E.coli that the product of the enzymatic reaction is not dihydrodipicolinate but in fact (4S)-4-hydroxy-2,3,4,5-tetrahydro-(2S)-dipicolinic acid (HTPA), and that the consecutive dehydration reaction leading to DHDP is not spontaneous but catalyzed by DapB.</text>
</comment>